<sequence>MSELCMSTPISVIVVGALGKMGREVVKAVHQAPDTALYAAVDRKQVGEDIGEALGLGTLEIPISGSLQEVCVAAAQEKQPVVMVDFTHPQAVYENVRMAIAYGVYPVVGTTGLSPEQIEELAEFADKADMGAVIAPNFSIGMVLLQEAAIRASQYFDHVEIIELHHNQKADAPSGTALQTAQRLAELGKTFNPPQVQESEHLRGARGAFAAAEIRIHSVRLPGLIAHQEVIFGAPGQIYTLRHDTSDRQCYMPGVLLAIRKVRQLKRLIYGLEKLL</sequence>
<keyword id="KW-0028">Amino-acid biosynthesis</keyword>
<keyword id="KW-0963">Cytoplasm</keyword>
<keyword id="KW-0220">Diaminopimelate biosynthesis</keyword>
<keyword id="KW-0457">Lysine biosynthesis</keyword>
<keyword id="KW-0520">NAD</keyword>
<keyword id="KW-0521">NADP</keyword>
<keyword id="KW-0560">Oxidoreductase</keyword>
<keyword id="KW-1185">Reference proteome</keyword>
<proteinExistence type="inferred from homology"/>
<reference key="1">
    <citation type="journal article" date="2002" name="DNA Res.">
        <title>Complete genome structure of the thermophilic cyanobacterium Thermosynechococcus elongatus BP-1.</title>
        <authorList>
            <person name="Nakamura Y."/>
            <person name="Kaneko T."/>
            <person name="Sato S."/>
            <person name="Ikeuchi M."/>
            <person name="Katoh H."/>
            <person name="Sasamoto S."/>
            <person name="Watanabe A."/>
            <person name="Iriguchi M."/>
            <person name="Kawashima K."/>
            <person name="Kimura T."/>
            <person name="Kishida Y."/>
            <person name="Kiyokawa C."/>
            <person name="Kohara M."/>
            <person name="Matsumoto M."/>
            <person name="Matsuno A."/>
            <person name="Nakazaki N."/>
            <person name="Shimpo S."/>
            <person name="Sugimoto M."/>
            <person name="Takeuchi C."/>
            <person name="Yamada M."/>
            <person name="Tabata S."/>
        </authorList>
    </citation>
    <scope>NUCLEOTIDE SEQUENCE [LARGE SCALE GENOMIC DNA]</scope>
    <source>
        <strain>NIES-2133 / IAM M-273 / BP-1</strain>
    </source>
</reference>
<name>DAPB_THEVB</name>
<feature type="chain" id="PRO_0000141499" description="4-hydroxy-tetrahydrodipicolinate reductase">
    <location>
        <begin position="1"/>
        <end position="276"/>
    </location>
</feature>
<feature type="active site" description="Proton donor/acceptor" evidence="1">
    <location>
        <position position="165"/>
    </location>
</feature>
<feature type="active site" description="Proton donor" evidence="1">
    <location>
        <position position="169"/>
    </location>
</feature>
<feature type="binding site" evidence="1">
    <location>
        <begin position="16"/>
        <end position="21"/>
    </location>
    <ligand>
        <name>NAD(+)</name>
        <dbReference type="ChEBI" id="CHEBI:57540"/>
    </ligand>
</feature>
<feature type="binding site" evidence="1">
    <location>
        <position position="44"/>
    </location>
    <ligand>
        <name>NADP(+)</name>
        <dbReference type="ChEBI" id="CHEBI:58349"/>
    </ligand>
</feature>
<feature type="binding site" evidence="1">
    <location>
        <begin position="109"/>
        <end position="111"/>
    </location>
    <ligand>
        <name>NAD(+)</name>
        <dbReference type="ChEBI" id="CHEBI:57540"/>
    </ligand>
</feature>
<feature type="binding site" evidence="1">
    <location>
        <begin position="135"/>
        <end position="138"/>
    </location>
    <ligand>
        <name>NAD(+)</name>
        <dbReference type="ChEBI" id="CHEBI:57540"/>
    </ligand>
</feature>
<feature type="binding site" evidence="1">
    <location>
        <position position="166"/>
    </location>
    <ligand>
        <name>(S)-2,3,4,5-tetrahydrodipicolinate</name>
        <dbReference type="ChEBI" id="CHEBI:16845"/>
    </ligand>
</feature>
<feature type="binding site" evidence="1">
    <location>
        <begin position="175"/>
        <end position="176"/>
    </location>
    <ligand>
        <name>(S)-2,3,4,5-tetrahydrodipicolinate</name>
        <dbReference type="ChEBI" id="CHEBI:16845"/>
    </ligand>
</feature>
<gene>
    <name evidence="1" type="primary">dapB</name>
    <name type="ordered locus">tll1987</name>
</gene>
<comment type="function">
    <text evidence="1">Catalyzes the conversion of 4-hydroxy-tetrahydrodipicolinate (HTPA) to tetrahydrodipicolinate.</text>
</comment>
<comment type="catalytic activity">
    <reaction evidence="1">
        <text>(S)-2,3,4,5-tetrahydrodipicolinate + NAD(+) + H2O = (2S,4S)-4-hydroxy-2,3,4,5-tetrahydrodipicolinate + NADH + H(+)</text>
        <dbReference type="Rhea" id="RHEA:35323"/>
        <dbReference type="ChEBI" id="CHEBI:15377"/>
        <dbReference type="ChEBI" id="CHEBI:15378"/>
        <dbReference type="ChEBI" id="CHEBI:16845"/>
        <dbReference type="ChEBI" id="CHEBI:57540"/>
        <dbReference type="ChEBI" id="CHEBI:57945"/>
        <dbReference type="ChEBI" id="CHEBI:67139"/>
        <dbReference type="EC" id="1.17.1.8"/>
    </reaction>
</comment>
<comment type="catalytic activity">
    <reaction evidence="1">
        <text>(S)-2,3,4,5-tetrahydrodipicolinate + NADP(+) + H2O = (2S,4S)-4-hydroxy-2,3,4,5-tetrahydrodipicolinate + NADPH + H(+)</text>
        <dbReference type="Rhea" id="RHEA:35331"/>
        <dbReference type="ChEBI" id="CHEBI:15377"/>
        <dbReference type="ChEBI" id="CHEBI:15378"/>
        <dbReference type="ChEBI" id="CHEBI:16845"/>
        <dbReference type="ChEBI" id="CHEBI:57783"/>
        <dbReference type="ChEBI" id="CHEBI:58349"/>
        <dbReference type="ChEBI" id="CHEBI:67139"/>
        <dbReference type="EC" id="1.17.1.8"/>
    </reaction>
</comment>
<comment type="pathway">
    <text evidence="1">Amino-acid biosynthesis; L-lysine biosynthesis via DAP pathway; (S)-tetrahydrodipicolinate from L-aspartate: step 4/4.</text>
</comment>
<comment type="subcellular location">
    <subcellularLocation>
        <location evidence="1">Cytoplasm</location>
    </subcellularLocation>
</comment>
<comment type="similarity">
    <text evidence="1">Belongs to the DapB family.</text>
</comment>
<comment type="caution">
    <text evidence="2">Was originally thought to be a dihydrodipicolinate reductase (DHDPR), catalyzing the conversion of dihydrodipicolinate to tetrahydrodipicolinate. However, it was shown in E.coli that the substrate of the enzymatic reaction is not dihydrodipicolinate (DHDP) but in fact (2S,4S)-4-hydroxy-2,3,4,5-tetrahydrodipicolinic acid (HTPA), the product released by the DapA-catalyzed reaction.</text>
</comment>
<evidence type="ECO:0000255" key="1">
    <source>
        <dbReference type="HAMAP-Rule" id="MF_00102"/>
    </source>
</evidence>
<evidence type="ECO:0000305" key="2"/>
<accession>Q8DHH2</accession>
<organism>
    <name type="scientific">Thermosynechococcus vestitus (strain NIES-2133 / IAM M-273 / BP-1)</name>
    <dbReference type="NCBI Taxonomy" id="197221"/>
    <lineage>
        <taxon>Bacteria</taxon>
        <taxon>Bacillati</taxon>
        <taxon>Cyanobacteriota</taxon>
        <taxon>Cyanophyceae</taxon>
        <taxon>Acaryochloridales</taxon>
        <taxon>Thermosynechococcaceae</taxon>
        <taxon>Thermosynechococcus</taxon>
    </lineage>
</organism>
<protein>
    <recommendedName>
        <fullName evidence="1">4-hydroxy-tetrahydrodipicolinate reductase</fullName>
        <shortName evidence="1">HTPA reductase</shortName>
        <ecNumber evidence="1">1.17.1.8</ecNumber>
    </recommendedName>
</protein>
<dbReference type="EC" id="1.17.1.8" evidence="1"/>
<dbReference type="EMBL" id="BA000039">
    <property type="protein sequence ID" value="BAC09539.1"/>
    <property type="molecule type" value="Genomic_DNA"/>
</dbReference>
<dbReference type="RefSeq" id="NP_682777.1">
    <property type="nucleotide sequence ID" value="NC_004113.1"/>
</dbReference>
<dbReference type="SMR" id="Q8DHH2"/>
<dbReference type="STRING" id="197221.gene:10748595"/>
<dbReference type="EnsemblBacteria" id="BAC09539">
    <property type="protein sequence ID" value="BAC09539"/>
    <property type="gene ID" value="BAC09539"/>
</dbReference>
<dbReference type="KEGG" id="tel:tll1987"/>
<dbReference type="PATRIC" id="fig|197221.4.peg.2077"/>
<dbReference type="eggNOG" id="COG0289">
    <property type="taxonomic scope" value="Bacteria"/>
</dbReference>
<dbReference type="UniPathway" id="UPA00034">
    <property type="reaction ID" value="UER00018"/>
</dbReference>
<dbReference type="Proteomes" id="UP000000440">
    <property type="component" value="Chromosome"/>
</dbReference>
<dbReference type="GO" id="GO:0005829">
    <property type="term" value="C:cytosol"/>
    <property type="evidence" value="ECO:0007669"/>
    <property type="project" value="TreeGrafter"/>
</dbReference>
<dbReference type="GO" id="GO:0008839">
    <property type="term" value="F:4-hydroxy-tetrahydrodipicolinate reductase"/>
    <property type="evidence" value="ECO:0007669"/>
    <property type="project" value="UniProtKB-EC"/>
</dbReference>
<dbReference type="GO" id="GO:0051287">
    <property type="term" value="F:NAD binding"/>
    <property type="evidence" value="ECO:0007669"/>
    <property type="project" value="UniProtKB-UniRule"/>
</dbReference>
<dbReference type="GO" id="GO:0050661">
    <property type="term" value="F:NADP binding"/>
    <property type="evidence" value="ECO:0007669"/>
    <property type="project" value="UniProtKB-UniRule"/>
</dbReference>
<dbReference type="GO" id="GO:0016726">
    <property type="term" value="F:oxidoreductase activity, acting on CH or CH2 groups, NAD or NADP as acceptor"/>
    <property type="evidence" value="ECO:0007669"/>
    <property type="project" value="UniProtKB-UniRule"/>
</dbReference>
<dbReference type="GO" id="GO:0019877">
    <property type="term" value="P:diaminopimelate biosynthetic process"/>
    <property type="evidence" value="ECO:0007669"/>
    <property type="project" value="UniProtKB-UniRule"/>
</dbReference>
<dbReference type="GO" id="GO:0009089">
    <property type="term" value="P:lysine biosynthetic process via diaminopimelate"/>
    <property type="evidence" value="ECO:0007669"/>
    <property type="project" value="UniProtKB-UniRule"/>
</dbReference>
<dbReference type="CDD" id="cd02274">
    <property type="entry name" value="DHDPR_N"/>
    <property type="match status" value="1"/>
</dbReference>
<dbReference type="FunFam" id="3.30.360.10:FF:000009">
    <property type="entry name" value="4-hydroxy-tetrahydrodipicolinate reductase"/>
    <property type="match status" value="1"/>
</dbReference>
<dbReference type="Gene3D" id="3.30.360.10">
    <property type="entry name" value="Dihydrodipicolinate Reductase, domain 2"/>
    <property type="match status" value="1"/>
</dbReference>
<dbReference type="Gene3D" id="3.40.50.720">
    <property type="entry name" value="NAD(P)-binding Rossmann-like Domain"/>
    <property type="match status" value="1"/>
</dbReference>
<dbReference type="HAMAP" id="MF_00102">
    <property type="entry name" value="DapB"/>
    <property type="match status" value="1"/>
</dbReference>
<dbReference type="InterPro" id="IPR022663">
    <property type="entry name" value="DapB_C"/>
</dbReference>
<dbReference type="InterPro" id="IPR000846">
    <property type="entry name" value="DapB_N"/>
</dbReference>
<dbReference type="InterPro" id="IPR022664">
    <property type="entry name" value="DapB_N_CS"/>
</dbReference>
<dbReference type="InterPro" id="IPR023940">
    <property type="entry name" value="DHDPR_bac"/>
</dbReference>
<dbReference type="InterPro" id="IPR036291">
    <property type="entry name" value="NAD(P)-bd_dom_sf"/>
</dbReference>
<dbReference type="NCBIfam" id="TIGR00036">
    <property type="entry name" value="dapB"/>
    <property type="match status" value="1"/>
</dbReference>
<dbReference type="PANTHER" id="PTHR20836:SF0">
    <property type="entry name" value="4-HYDROXY-TETRAHYDRODIPICOLINATE REDUCTASE 1, CHLOROPLASTIC-RELATED"/>
    <property type="match status" value="1"/>
</dbReference>
<dbReference type="PANTHER" id="PTHR20836">
    <property type="entry name" value="DIHYDRODIPICOLINATE REDUCTASE"/>
    <property type="match status" value="1"/>
</dbReference>
<dbReference type="Pfam" id="PF05173">
    <property type="entry name" value="DapB_C"/>
    <property type="match status" value="1"/>
</dbReference>
<dbReference type="Pfam" id="PF01113">
    <property type="entry name" value="DapB_N"/>
    <property type="match status" value="1"/>
</dbReference>
<dbReference type="PIRSF" id="PIRSF000161">
    <property type="entry name" value="DHPR"/>
    <property type="match status" value="1"/>
</dbReference>
<dbReference type="SUPFAM" id="SSF55347">
    <property type="entry name" value="Glyceraldehyde-3-phosphate dehydrogenase-like, C-terminal domain"/>
    <property type="match status" value="1"/>
</dbReference>
<dbReference type="SUPFAM" id="SSF51735">
    <property type="entry name" value="NAD(P)-binding Rossmann-fold domains"/>
    <property type="match status" value="1"/>
</dbReference>
<dbReference type="PROSITE" id="PS01298">
    <property type="entry name" value="DAPB"/>
    <property type="match status" value="1"/>
</dbReference>